<protein>
    <recommendedName>
        <fullName evidence="7">Cysteine proteinase inhibitor 1</fullName>
        <shortName evidence="7">KCPI1</shortName>
    </recommendedName>
    <alternativeName>
        <fullName evidence="2">Phytocystatin</fullName>
    </alternativeName>
</protein>
<keyword id="KW-0020">Allergen</keyword>
<keyword id="KW-0903">Direct protein sequencing</keyword>
<keyword id="KW-0325">Glycoprotein</keyword>
<keyword id="KW-0611">Plant defense</keyword>
<keyword id="KW-0646">Protease inhibitor</keyword>
<keyword id="KW-1185">Reference proteome</keyword>
<keyword id="KW-0964">Secreted</keyword>
<keyword id="KW-0732">Signal</keyword>
<keyword id="KW-0789">Thiol protease inhibitor</keyword>
<reference key="1">
    <citation type="journal article" date="2018" name="BMC Genomics">
        <title>A manually annotated Actinidia chinensis var. chinensis (kiwifruit) genome highlights the challenges associated with draft genomes and gene prediction in plants.</title>
        <authorList>
            <person name="Pilkington S.M."/>
            <person name="Crowhurst R."/>
            <person name="Hilario E."/>
            <person name="Nardozza S."/>
            <person name="Fraser L."/>
            <person name="Peng Y."/>
            <person name="Gunaseelan K."/>
            <person name="Simpson R."/>
            <person name="Tahir J."/>
            <person name="Deroles S.C."/>
            <person name="Templeton K."/>
            <person name="Luo Z."/>
            <person name="Davy M."/>
            <person name="Cheng C."/>
            <person name="McNeilage M."/>
            <person name="Scaglione D."/>
            <person name="Liu Y."/>
            <person name="Zhang Q."/>
            <person name="Datson P."/>
            <person name="De Silva N."/>
            <person name="Gardiner S.E."/>
            <person name="Bassett H."/>
            <person name="Chagne D."/>
            <person name="McCallum J."/>
            <person name="Dzierzon H."/>
            <person name="Deng C."/>
            <person name="Wang Y.Y."/>
            <person name="Barron L."/>
            <person name="Manako K."/>
            <person name="Bowen J."/>
            <person name="Foster T.M."/>
            <person name="Erridge Z.A."/>
            <person name="Tiffin H."/>
            <person name="Waite C.N."/>
            <person name="Davies K.M."/>
            <person name="Grierson E.P."/>
            <person name="Laing W.A."/>
            <person name="Kirk R."/>
            <person name="Chen X."/>
            <person name="Wood M."/>
            <person name="Montefiori M."/>
            <person name="Brummell D.A."/>
            <person name="Schwinn K.E."/>
            <person name="Catanach A."/>
            <person name="Fullerton C."/>
            <person name="Li D."/>
            <person name="Meiyalaghan S."/>
            <person name="Nieuwenhuizen N."/>
            <person name="Read N."/>
            <person name="Prakash R."/>
            <person name="Hunter D."/>
            <person name="Zhang H."/>
            <person name="McKenzie M."/>
            <person name="Knabel M."/>
            <person name="Harris A."/>
            <person name="Allan A.C."/>
            <person name="Gleave A."/>
            <person name="Chen A."/>
            <person name="Janssen B.J."/>
            <person name="Plunkett B."/>
            <person name="Ampomah-Dwamena C."/>
            <person name="Voogd C."/>
            <person name="Leif D."/>
            <person name="Lafferty D."/>
            <person name="Souleyre E.J.F."/>
            <person name="Varkonyi-Gasic E."/>
            <person name="Gambi F."/>
            <person name="Hanley J."/>
            <person name="Yao J.L."/>
            <person name="Cheung J."/>
            <person name="David K.M."/>
            <person name="Warren B."/>
            <person name="Marsh K."/>
            <person name="Snowden K.C."/>
            <person name="Lin-Wang K."/>
            <person name="Brian L."/>
            <person name="Martinez-Sanchez M."/>
            <person name="Wang M."/>
            <person name="Ileperuma N."/>
            <person name="Macnee N."/>
            <person name="Campin R."/>
            <person name="McAtee P."/>
            <person name="Drummond R.S.M."/>
            <person name="Espley R.V."/>
            <person name="Ireland H.S."/>
            <person name="Wu R."/>
            <person name="Atkinson R.G."/>
            <person name="Karunairetnam S."/>
            <person name="Bulley S."/>
            <person name="Chunkath S."/>
            <person name="Hanley Z."/>
            <person name="Storey R."/>
            <person name="Thrimawithana A.H."/>
            <person name="Thomson S."/>
            <person name="David C."/>
            <person name="Testolin R."/>
            <person name="Huang H."/>
            <person name="Hellens R.P."/>
            <person name="Schaffer R.J."/>
        </authorList>
    </citation>
    <scope>NUCLEOTIDE SEQUENCE [LARGE SCALE GENOMIC DNA]</scope>
    <source>
        <strain>cv. Red5</strain>
    </source>
</reference>
<reference key="2">
    <citation type="journal article" date="2004" name="Phytochemistry">
        <title>Purification and characterization of phytocystatins from kiwifruit cortex and seeds.</title>
        <authorList>
            <person name="Rassam M."/>
            <person name="Laing W.A."/>
        </authorList>
    </citation>
    <scope>PROTEIN SEQUENCE OF 27-46</scope>
    <source>
        <strain evidence="5">cv. Hort 16A</strain>
        <tissue evidence="5">Seed</tissue>
    </source>
</reference>
<reference key="3">
    <citation type="journal article" date="2004" name="J. Allergy Clin. Immunol.">
        <title>IgE sensitization profiles toward green and gold kiwifruits differ among patients allergic to kiwifruit from 3 European countries.</title>
        <authorList>
            <person name="Bublin M."/>
            <person name="Mari A."/>
            <person name="Ebner C."/>
            <person name="Knulst A."/>
            <person name="Scheiner O."/>
            <person name="Hoffmann-Sommergruber K."/>
            <person name="Breiteneder H."/>
            <person name="Radauer C."/>
        </authorList>
    </citation>
    <scope>PROTEIN SEQUENCE OF 27-37</scope>
    <scope>ALLERGEN</scope>
    <source>
        <strain evidence="6">cv. Hort 16A</strain>
        <tissue evidence="6">Fruit</tissue>
    </source>
</reference>
<comment type="function">
    <text evidence="2">Specific inhibitor of papain family cysteine proteinases.</text>
</comment>
<comment type="subcellular location">
    <subcellularLocation>
        <location evidence="1">Secreted</location>
    </subcellularLocation>
</comment>
<comment type="allergen">
    <text evidence="6">Causes an allergic reaction in human. Binds IgE.</text>
</comment>
<comment type="similarity">
    <text evidence="8">Belongs to the cystatin family. Phytocystatin subfamily.</text>
</comment>
<organism>
    <name type="scientific">Actinidia chinensis var. chinensis</name>
    <name type="common">Chinese soft-hair kiwi</name>
    <dbReference type="NCBI Taxonomy" id="1590841"/>
    <lineage>
        <taxon>Eukaryota</taxon>
        <taxon>Viridiplantae</taxon>
        <taxon>Streptophyta</taxon>
        <taxon>Embryophyta</taxon>
        <taxon>Tracheophyta</taxon>
        <taxon>Spermatophyta</taxon>
        <taxon>Magnoliopsida</taxon>
        <taxon>eudicotyledons</taxon>
        <taxon>Gunneridae</taxon>
        <taxon>Pentapetalae</taxon>
        <taxon>asterids</taxon>
        <taxon>Ericales</taxon>
        <taxon>Actinidiaceae</taxon>
        <taxon>Actinidia</taxon>
    </lineage>
</organism>
<name>CYT1_ACTCC</name>
<evidence type="ECO:0000250" key="1">
    <source>
        <dbReference type="UniProtKB" id="P01035"/>
    </source>
</evidence>
<evidence type="ECO:0000250" key="2">
    <source>
        <dbReference type="UniProtKB" id="Q6TPK4"/>
    </source>
</evidence>
<evidence type="ECO:0000255" key="3"/>
<evidence type="ECO:0000255" key="4">
    <source>
        <dbReference type="PROSITE-ProRule" id="PRU00498"/>
    </source>
</evidence>
<evidence type="ECO:0000269" key="5">
    <source>
    </source>
</evidence>
<evidence type="ECO:0000269" key="6">
    <source>
    </source>
</evidence>
<evidence type="ECO:0000303" key="7">
    <source>
    </source>
</evidence>
<evidence type="ECO:0000305" key="8"/>
<evidence type="ECO:0000312" key="9">
    <source>
        <dbReference type="EMBL" id="PSS04667.1"/>
    </source>
</evidence>
<gene>
    <name evidence="8" type="primary">CYT1</name>
    <name evidence="9" type="ORF">CEY00_Acc20523</name>
</gene>
<accession>P86472</accession>
<accession>A0A2R6Q9U2</accession>
<dbReference type="EMBL" id="NKQK01000018">
    <property type="protein sequence ID" value="PSS04667.1"/>
    <property type="molecule type" value="Genomic_DNA"/>
</dbReference>
<dbReference type="SMR" id="P86472"/>
<dbReference type="FunCoup" id="P86472">
    <property type="interactions" value="2"/>
</dbReference>
<dbReference type="STRING" id="1590841.P86472"/>
<dbReference type="Allergome" id="2406">
    <property type="allergen name" value="Act c 4"/>
</dbReference>
<dbReference type="GlyCosmos" id="P86472">
    <property type="glycosylation" value="1 site, No reported glycans"/>
</dbReference>
<dbReference type="EnsemblPlants" id="PSS04667">
    <property type="protein sequence ID" value="PSS04667"/>
    <property type="gene ID" value="CEY00_Acc20523"/>
</dbReference>
<dbReference type="Gramene" id="PSS04667">
    <property type="protein sequence ID" value="PSS04667"/>
    <property type="gene ID" value="CEY00_Acc20523"/>
</dbReference>
<dbReference type="InParanoid" id="P86472"/>
<dbReference type="OMA" id="KFAITEH"/>
<dbReference type="OrthoDB" id="2016588at2759"/>
<dbReference type="Proteomes" id="UP000241394">
    <property type="component" value="Chromosome LG18"/>
</dbReference>
<dbReference type="GO" id="GO:0005576">
    <property type="term" value="C:extracellular region"/>
    <property type="evidence" value="ECO:0007669"/>
    <property type="project" value="UniProtKB-SubCell"/>
</dbReference>
<dbReference type="GO" id="GO:0004869">
    <property type="term" value="F:cysteine-type endopeptidase inhibitor activity"/>
    <property type="evidence" value="ECO:0007669"/>
    <property type="project" value="UniProtKB-KW"/>
</dbReference>
<dbReference type="GO" id="GO:0006952">
    <property type="term" value="P:defense response"/>
    <property type="evidence" value="ECO:0007669"/>
    <property type="project" value="UniProtKB-KW"/>
</dbReference>
<dbReference type="CDD" id="cd00042">
    <property type="entry name" value="CY"/>
    <property type="match status" value="1"/>
</dbReference>
<dbReference type="FunFam" id="3.10.450.10:FF:000035">
    <property type="entry name" value="Cysteine proteinase inhibitor 1"/>
    <property type="match status" value="1"/>
</dbReference>
<dbReference type="Gene3D" id="3.10.450.10">
    <property type="match status" value="1"/>
</dbReference>
<dbReference type="InterPro" id="IPR000010">
    <property type="entry name" value="Cystatin_dom"/>
</dbReference>
<dbReference type="InterPro" id="IPR046350">
    <property type="entry name" value="Cystatin_sf"/>
</dbReference>
<dbReference type="PANTHER" id="PTHR47364">
    <property type="entry name" value="CYSTEINE PROTEINASE INHIBITOR 5"/>
    <property type="match status" value="1"/>
</dbReference>
<dbReference type="PANTHER" id="PTHR47364:SF2">
    <property type="entry name" value="CYSTEINE PROTEINASE INHIBITOR 5"/>
    <property type="match status" value="1"/>
</dbReference>
<dbReference type="Pfam" id="PF16845">
    <property type="entry name" value="SQAPI"/>
    <property type="match status" value="1"/>
</dbReference>
<dbReference type="SMART" id="SM00043">
    <property type="entry name" value="CY"/>
    <property type="match status" value="1"/>
</dbReference>
<dbReference type="SUPFAM" id="SSF54403">
    <property type="entry name" value="Cystatin/monellin"/>
    <property type="match status" value="1"/>
</dbReference>
<feature type="signal peptide" evidence="3">
    <location>
        <begin position="1"/>
        <end position="22"/>
    </location>
</feature>
<feature type="chain" id="PRO_0000393865" description="Cysteine proteinase inhibitor 1">
    <location>
        <begin position="23"/>
        <end position="116"/>
    </location>
</feature>
<feature type="domain" description="Cystatin" evidence="3">
    <location>
        <begin position="30"/>
        <end position="89"/>
    </location>
</feature>
<feature type="short sequence motif" description="Secondary area of contact" evidence="1">
    <location>
        <begin position="73"/>
        <end position="77"/>
    </location>
</feature>
<feature type="site" description="Reactive site" evidence="1">
    <location>
        <position position="30"/>
    </location>
</feature>
<feature type="glycosylation site" description="N-linked (GlcNAc...) asparagine" evidence="4">
    <location>
        <position position="109"/>
    </location>
</feature>
<feature type="sequence conflict" description="In Ref. 3; AA sequence." evidence="8" ref="3">
    <original>N</original>
    <variation>E</variation>
    <location>
        <position position="37"/>
    </location>
</feature>
<feature type="sequence conflict" description="In Ref. 2; AA sequence." evidence="8" ref="2">
    <original>N</original>
    <variation>S</variation>
    <location>
        <position position="37"/>
    </location>
</feature>
<proteinExistence type="evidence at protein level"/>
<sequence length="116" mass="12792">MVPKPLSLLLLLLLALSAAVVGGRKRVAAGGWRPIENLNSAEVQDVAQFAVSEHNKQANDELQYQSVVRGYTQVVAGTNYRLVIAAKDGAVVGNYEAVVWDKPWMHFRNLTSFRKV</sequence>